<reference key="1">
    <citation type="journal article" date="1991" name="Biochim. Biophys. Acta">
        <title>The complete amino acid sequence of feline beta-lactoglobulin II and a partial revision of the equine beta-lactoglobulin II sequence.</title>
        <authorList>
            <person name="Halliday J.A."/>
            <person name="Bell K."/>
            <person name="Shaw D.C."/>
        </authorList>
    </citation>
    <scope>PROTEIN SEQUENCE</scope>
</reference>
<reference key="2">
    <citation type="journal article" date="1990" name="Comp. Biochem. Physiol.">
        <title>Feline whey proteins: identification, isolation and initial characterization of alpha-lactalbumin, beta-lactoglobulin and lysozyme.</title>
        <authorList>
            <person name="Halliday J.A."/>
            <person name="Bell K."/>
            <person name="McKenzie H.A."/>
            <person name="Shaw D.C."/>
        </authorList>
    </citation>
    <scope>PROTEIN SEQUENCE OF 1-24</scope>
    <source>
        <tissue>Milk</tissue>
    </source>
</reference>
<gene>
    <name type="primary">LGB2</name>
</gene>
<keyword id="KW-0903">Direct protein sequencing</keyword>
<keyword id="KW-1015">Disulfide bond</keyword>
<keyword id="KW-0494">Milk protein</keyword>
<keyword id="KW-1185">Reference proteome</keyword>
<keyword id="KW-0683">Retinol-binding</keyword>
<keyword id="KW-0964">Secreted</keyword>
<keyword id="KW-0813">Transport</keyword>
<sequence>ATLPPTMEDLDIRQVAGTWHSMAMAASDISLLDSETAPLRVYVQELRPTPRDNLEIILRKRENHACIEGNIMAQRTEDPAVFMVDYQGEKKISVLDTDYTHYMFFCMEAPAPGTENGMMCQYLARTLKADNEVMEKFDRALQTLPVHIRIILDLTQGKEQCRV</sequence>
<dbReference type="PIR" id="S14719">
    <property type="entry name" value="S14719"/>
</dbReference>
<dbReference type="SMR" id="P21664"/>
<dbReference type="STRING" id="9685.ENSFCAP00000020178"/>
<dbReference type="PaxDb" id="9685-ENSFCAP00000020178"/>
<dbReference type="eggNOG" id="ENOG502T0EI">
    <property type="taxonomic scope" value="Eukaryota"/>
</dbReference>
<dbReference type="InParanoid" id="P21664"/>
<dbReference type="Proteomes" id="UP000011712">
    <property type="component" value="Unplaced"/>
</dbReference>
<dbReference type="GO" id="GO:0005576">
    <property type="term" value="C:extracellular region"/>
    <property type="evidence" value="ECO:0007669"/>
    <property type="project" value="UniProtKB-SubCell"/>
</dbReference>
<dbReference type="GO" id="GO:0019841">
    <property type="term" value="F:retinol binding"/>
    <property type="evidence" value="ECO:0007669"/>
    <property type="project" value="UniProtKB-KW"/>
</dbReference>
<dbReference type="CDD" id="cd19416">
    <property type="entry name" value="lipocalin_beta-LG-like"/>
    <property type="match status" value="1"/>
</dbReference>
<dbReference type="Gene3D" id="2.40.128.20">
    <property type="match status" value="1"/>
</dbReference>
<dbReference type="InterPro" id="IPR002447">
    <property type="entry name" value="Blactoglobulin"/>
</dbReference>
<dbReference type="InterPro" id="IPR012674">
    <property type="entry name" value="Calycin"/>
</dbReference>
<dbReference type="InterPro" id="IPR002345">
    <property type="entry name" value="Lipocalin"/>
</dbReference>
<dbReference type="InterPro" id="IPR022272">
    <property type="entry name" value="Lipocalin_CS"/>
</dbReference>
<dbReference type="InterPro" id="IPR000566">
    <property type="entry name" value="Lipocln_cytosolic_FA-bd_dom"/>
</dbReference>
<dbReference type="PANTHER" id="PTHR11430:SF117">
    <property type="entry name" value="GLYCODELIN"/>
    <property type="match status" value="1"/>
</dbReference>
<dbReference type="PANTHER" id="PTHR11430">
    <property type="entry name" value="LIPOCALIN"/>
    <property type="match status" value="1"/>
</dbReference>
<dbReference type="Pfam" id="PF00061">
    <property type="entry name" value="Lipocalin"/>
    <property type="match status" value="1"/>
</dbReference>
<dbReference type="PRINTS" id="PR01172">
    <property type="entry name" value="BLCTOGLOBULN"/>
</dbReference>
<dbReference type="PRINTS" id="PR00179">
    <property type="entry name" value="LIPOCALIN"/>
</dbReference>
<dbReference type="SUPFAM" id="SSF50814">
    <property type="entry name" value="Lipocalins"/>
    <property type="match status" value="1"/>
</dbReference>
<dbReference type="PROSITE" id="PS00213">
    <property type="entry name" value="LIPOCALIN"/>
    <property type="match status" value="1"/>
</dbReference>
<organism>
    <name type="scientific">Felis catus</name>
    <name type="common">Cat</name>
    <name type="synonym">Felis silvestris catus</name>
    <dbReference type="NCBI Taxonomy" id="9685"/>
    <lineage>
        <taxon>Eukaryota</taxon>
        <taxon>Metazoa</taxon>
        <taxon>Chordata</taxon>
        <taxon>Craniata</taxon>
        <taxon>Vertebrata</taxon>
        <taxon>Euteleostomi</taxon>
        <taxon>Mammalia</taxon>
        <taxon>Eutheria</taxon>
        <taxon>Laurasiatheria</taxon>
        <taxon>Carnivora</taxon>
        <taxon>Feliformia</taxon>
        <taxon>Felidae</taxon>
        <taxon>Felinae</taxon>
        <taxon>Felis</taxon>
    </lineage>
</organism>
<feature type="chain" id="PRO_0000201018" description="Beta-lactoglobulin-2">
    <location>
        <begin position="1"/>
        <end position="163"/>
    </location>
</feature>
<feature type="disulfide bond" evidence="1">
    <location>
        <begin position="66"/>
        <end position="161"/>
    </location>
</feature>
<feature type="disulfide bond" evidence="1">
    <location>
        <begin position="106"/>
        <end position="120"/>
    </location>
</feature>
<protein>
    <recommendedName>
        <fullName>Beta-lactoglobulin-2</fullName>
        <shortName>Beta-LG-2</shortName>
    </recommendedName>
    <alternativeName>
        <fullName>Beta-lactoglobulin II</fullName>
    </alternativeName>
</protein>
<name>LACB2_FELCA</name>
<accession>P21664</accession>
<evidence type="ECO:0000250" key="1"/>
<evidence type="ECO:0000305" key="2"/>
<comment type="function">
    <text>Lactoglobulin is the primary component of whey, it binds retinol and is probably involved in the transport of that molecule.</text>
</comment>
<comment type="subunit">
    <text>Monomer.</text>
</comment>
<comment type="subcellular location">
    <subcellularLocation>
        <location>Secreted</location>
    </subcellularLocation>
</comment>
<comment type="similarity">
    <text evidence="2">Belongs to the calycin superfamily. Lipocalin family.</text>
</comment>
<proteinExistence type="evidence at protein level"/>